<sequence>MTQLAIGKPTPLGAHYDGQGVNFTLFSAHAERVELCVFDANGQEHRYDLPGHSGDIWHGYLPDARPGLRYGYRVHGPWQPAEGHRFNPAKLLIDPCARQIDGEFKDNPLLHAGHNEPDYRDNASIAPKCVVVVDHYDWEDDAPPRMPWGCTIIYEAHVKGLTYLHPEIPVEIRGTYKALGHPVMINYLKQLGITALELLPVAQFASEPRLQRMGLSNYWGYNPVAMFALHPAYACSPETALDEFRDAIKALHKAGIEVILDIVLNHSAELDLDGPLFSLRGIDNRSYYWIREDGDYHNWTGCGNTLNLSHPAVVDYASACLRYWVETCHVDGFRFDLAAVMGRTPEFRQDALLFTAIQNCPVLSQVKLIAEPWDIAPGGYQVGNFPPLFAEWNDHFRDAARRFWLHYDLPLGAFAGRFAASSDVFKRNGRLPSAAINLVTAHDGFTLRDCVCFNHKHNEANGEENRDGTNNNYSNNHGKEGLGGTLDLVERRRDSIHALLTTLLLSQGTPMLLAGDEHGHSQRGNNNAYCQDNQLTWLDWSQASSGLTAFTAALIHLRKRIPALMENRWWEEGDGNVRWLNRYAQPLSTDEWQNGPKQLQILLSDRFLIAINATLEVTEIVLPAGEWHAIPPFAGEDNPVITAVWQGPAHGLCVFQR</sequence>
<evidence type="ECO:0000255" key="1">
    <source>
        <dbReference type="HAMAP-Rule" id="MF_01248"/>
    </source>
</evidence>
<evidence type="ECO:0000256" key="2">
    <source>
        <dbReference type="SAM" id="MobiDB-lite"/>
    </source>
</evidence>
<gene>
    <name evidence="1" type="primary">glgX</name>
    <name type="ordered locus">UTI89_C3940</name>
</gene>
<comment type="function">
    <text evidence="1">Removes maltotriose and maltotetraose chains that are attached by 1,6-alpha-linkage to the limit dextrin main chain, generating a debranched limit dextrin.</text>
</comment>
<comment type="catalytic activity">
    <reaction evidence="1">
        <text>Hydrolysis of (1-&gt;6)-alpha-D-glucosidic linkages to branches with degrees of polymerization of three or four glucose residues in limit dextrin.</text>
        <dbReference type="EC" id="3.2.1.196"/>
    </reaction>
</comment>
<comment type="pathway">
    <text evidence="1">Glycan degradation; glycogen degradation.</text>
</comment>
<comment type="similarity">
    <text evidence="1">Belongs to the glycosyl hydrolase 13 family.</text>
</comment>
<feature type="chain" id="PRO_1000067102" description="Glycogen debranching enzyme">
    <location>
        <begin position="1"/>
        <end position="657"/>
    </location>
</feature>
<feature type="region of interest" description="Disordered" evidence="2">
    <location>
        <begin position="460"/>
        <end position="479"/>
    </location>
</feature>
<feature type="active site" description="Nucleophile" evidence="1">
    <location>
        <position position="336"/>
    </location>
</feature>
<feature type="active site" description="Proton donor" evidence="1">
    <location>
        <position position="371"/>
    </location>
</feature>
<feature type="site" description="Transition state stabilizer" evidence="1">
    <location>
        <position position="443"/>
    </location>
</feature>
<keyword id="KW-0119">Carbohydrate metabolism</keyword>
<keyword id="KW-0321">Glycogen metabolism</keyword>
<keyword id="KW-0326">Glycosidase</keyword>
<keyword id="KW-0378">Hydrolase</keyword>
<proteinExistence type="inferred from homology"/>
<accession>Q1R5J5</accession>
<name>GLGX_ECOUT</name>
<organism>
    <name type="scientific">Escherichia coli (strain UTI89 / UPEC)</name>
    <dbReference type="NCBI Taxonomy" id="364106"/>
    <lineage>
        <taxon>Bacteria</taxon>
        <taxon>Pseudomonadati</taxon>
        <taxon>Pseudomonadota</taxon>
        <taxon>Gammaproteobacteria</taxon>
        <taxon>Enterobacterales</taxon>
        <taxon>Enterobacteriaceae</taxon>
        <taxon>Escherichia</taxon>
    </lineage>
</organism>
<reference key="1">
    <citation type="journal article" date="2006" name="Proc. Natl. Acad. Sci. U.S.A.">
        <title>Identification of genes subject to positive selection in uropathogenic strains of Escherichia coli: a comparative genomics approach.</title>
        <authorList>
            <person name="Chen S.L."/>
            <person name="Hung C.-S."/>
            <person name="Xu J."/>
            <person name="Reigstad C.S."/>
            <person name="Magrini V."/>
            <person name="Sabo A."/>
            <person name="Blasiar D."/>
            <person name="Bieri T."/>
            <person name="Meyer R.R."/>
            <person name="Ozersky P."/>
            <person name="Armstrong J.R."/>
            <person name="Fulton R.S."/>
            <person name="Latreille J.P."/>
            <person name="Spieth J."/>
            <person name="Hooton T.M."/>
            <person name="Mardis E.R."/>
            <person name="Hultgren S.J."/>
            <person name="Gordon J.I."/>
        </authorList>
    </citation>
    <scope>NUCLEOTIDE SEQUENCE [LARGE SCALE GENOMIC DNA]</scope>
    <source>
        <strain>UTI89 / UPEC</strain>
    </source>
</reference>
<protein>
    <recommendedName>
        <fullName evidence="1">Glycogen debranching enzyme</fullName>
        <ecNumber evidence="1">3.2.1.196</ecNumber>
    </recommendedName>
    <alternativeName>
        <fullName evidence="1">Limit dextrin alpha-1,6-maltotetraose-hydrolase</fullName>
    </alternativeName>
</protein>
<dbReference type="EC" id="3.2.1.196" evidence="1"/>
<dbReference type="EMBL" id="CP000243">
    <property type="protein sequence ID" value="ABE09369.1"/>
    <property type="molecule type" value="Genomic_DNA"/>
</dbReference>
<dbReference type="RefSeq" id="WP_000192572.1">
    <property type="nucleotide sequence ID" value="NZ_CP064825.1"/>
</dbReference>
<dbReference type="SMR" id="Q1R5J5"/>
<dbReference type="CAZy" id="CBM48">
    <property type="family name" value="Carbohydrate-Binding Module Family 48"/>
</dbReference>
<dbReference type="CAZy" id="GH13">
    <property type="family name" value="Glycoside Hydrolase Family 13"/>
</dbReference>
<dbReference type="KEGG" id="eci:UTI89_C3940"/>
<dbReference type="HOGENOM" id="CLU_011725_1_1_6"/>
<dbReference type="UniPathway" id="UPA00165"/>
<dbReference type="Proteomes" id="UP000001952">
    <property type="component" value="Chromosome"/>
</dbReference>
<dbReference type="GO" id="GO:0004133">
    <property type="term" value="F:glycogen debranching enzyme activity"/>
    <property type="evidence" value="ECO:0007669"/>
    <property type="project" value="UniProtKB-UniRule"/>
</dbReference>
<dbReference type="GO" id="GO:0004553">
    <property type="term" value="F:hydrolase activity, hydrolyzing O-glycosyl compounds"/>
    <property type="evidence" value="ECO:0007669"/>
    <property type="project" value="InterPro"/>
</dbReference>
<dbReference type="GO" id="GO:0005980">
    <property type="term" value="P:glycogen catabolic process"/>
    <property type="evidence" value="ECO:0007669"/>
    <property type="project" value="UniProtKB-UniRule"/>
</dbReference>
<dbReference type="CDD" id="cd11326">
    <property type="entry name" value="AmyAc_Glg_debranch"/>
    <property type="match status" value="1"/>
</dbReference>
<dbReference type="CDD" id="cd02856">
    <property type="entry name" value="E_set_GDE_Isoamylase_N"/>
    <property type="match status" value="1"/>
</dbReference>
<dbReference type="FunFam" id="2.60.40.10:FF:000468">
    <property type="entry name" value="Glycogen debranching enzyme"/>
    <property type="match status" value="1"/>
</dbReference>
<dbReference type="FunFam" id="3.20.20.80:FF:000031">
    <property type="entry name" value="Glycogen debranching enzyme"/>
    <property type="match status" value="1"/>
</dbReference>
<dbReference type="Gene3D" id="3.20.20.80">
    <property type="entry name" value="Glycosidases"/>
    <property type="match status" value="1"/>
</dbReference>
<dbReference type="Gene3D" id="2.60.40.1180">
    <property type="entry name" value="Golgi alpha-mannosidase II"/>
    <property type="match status" value="1"/>
</dbReference>
<dbReference type="Gene3D" id="2.60.40.10">
    <property type="entry name" value="Immunoglobulins"/>
    <property type="match status" value="1"/>
</dbReference>
<dbReference type="HAMAP" id="MF_01248">
    <property type="entry name" value="GlgX"/>
    <property type="match status" value="1"/>
</dbReference>
<dbReference type="InterPro" id="IPR040784">
    <property type="entry name" value="GlgX_C"/>
</dbReference>
<dbReference type="InterPro" id="IPR044505">
    <property type="entry name" value="GlgX_Isoamylase_N_E_set"/>
</dbReference>
<dbReference type="InterPro" id="IPR006047">
    <property type="entry name" value="Glyco_hydro_13_cat_dom"/>
</dbReference>
<dbReference type="InterPro" id="IPR004193">
    <property type="entry name" value="Glyco_hydro_13_N"/>
</dbReference>
<dbReference type="InterPro" id="IPR013780">
    <property type="entry name" value="Glyco_hydro_b"/>
</dbReference>
<dbReference type="InterPro" id="IPR022844">
    <property type="entry name" value="Glycogen_debranch_bac"/>
</dbReference>
<dbReference type="InterPro" id="IPR011837">
    <property type="entry name" value="Glycogen_debranch_GlgX"/>
</dbReference>
<dbReference type="InterPro" id="IPR017853">
    <property type="entry name" value="Glycoside_hydrolase_SF"/>
</dbReference>
<dbReference type="InterPro" id="IPR013783">
    <property type="entry name" value="Ig-like_fold"/>
</dbReference>
<dbReference type="InterPro" id="IPR014756">
    <property type="entry name" value="Ig_E-set"/>
</dbReference>
<dbReference type="NCBIfam" id="TIGR02100">
    <property type="entry name" value="glgX_debranch"/>
    <property type="match status" value="1"/>
</dbReference>
<dbReference type="NCBIfam" id="NF002983">
    <property type="entry name" value="PRK03705.1"/>
    <property type="match status" value="1"/>
</dbReference>
<dbReference type="PANTHER" id="PTHR43002">
    <property type="entry name" value="GLYCOGEN DEBRANCHING ENZYME"/>
    <property type="match status" value="1"/>
</dbReference>
<dbReference type="Pfam" id="PF00128">
    <property type="entry name" value="Alpha-amylase"/>
    <property type="match status" value="1"/>
</dbReference>
<dbReference type="Pfam" id="PF02922">
    <property type="entry name" value="CBM_48"/>
    <property type="match status" value="1"/>
</dbReference>
<dbReference type="Pfam" id="PF18390">
    <property type="entry name" value="GlgX_C"/>
    <property type="match status" value="1"/>
</dbReference>
<dbReference type="SMART" id="SM00642">
    <property type="entry name" value="Aamy"/>
    <property type="match status" value="1"/>
</dbReference>
<dbReference type="SUPFAM" id="SSF51445">
    <property type="entry name" value="(Trans)glycosidases"/>
    <property type="match status" value="1"/>
</dbReference>
<dbReference type="SUPFAM" id="SSF81296">
    <property type="entry name" value="E set domains"/>
    <property type="match status" value="1"/>
</dbReference>